<accession>Q5HJF3</accession>
<keyword id="KW-0004">4Fe-4S</keyword>
<keyword id="KW-0119">Carbohydrate metabolism</keyword>
<keyword id="KW-0963">Cytoplasm</keyword>
<keyword id="KW-0313">Glucose metabolism</keyword>
<keyword id="KW-0408">Iron</keyword>
<keyword id="KW-0411">Iron-sulfur</keyword>
<keyword id="KW-0479">Metal-binding</keyword>
<keyword id="KW-0560">Oxidoreductase</keyword>
<keyword id="KW-0949">S-adenosyl-L-methionine</keyword>
<protein>
    <recommendedName>
        <fullName>Pyruvate formate-lyase-activating enzyme</fullName>
        <shortName>PFL-activating enzyme</shortName>
        <ecNumber>1.97.1.4</ecNumber>
    </recommendedName>
</protein>
<proteinExistence type="inferred from homology"/>
<organism>
    <name type="scientific">Staphylococcus aureus (strain COL)</name>
    <dbReference type="NCBI Taxonomy" id="93062"/>
    <lineage>
        <taxon>Bacteria</taxon>
        <taxon>Bacillati</taxon>
        <taxon>Bacillota</taxon>
        <taxon>Bacilli</taxon>
        <taxon>Bacillales</taxon>
        <taxon>Staphylococcaceae</taxon>
        <taxon>Staphylococcus</taxon>
    </lineage>
</organism>
<dbReference type="EC" id="1.97.1.4"/>
<dbReference type="EMBL" id="CP000046">
    <property type="protein sequence ID" value="AAW37501.1"/>
    <property type="molecule type" value="Genomic_DNA"/>
</dbReference>
<dbReference type="RefSeq" id="WP_000911657.1">
    <property type="nucleotide sequence ID" value="NZ_JBGOFO010000001.1"/>
</dbReference>
<dbReference type="SMR" id="Q5HJF3"/>
<dbReference type="KEGG" id="sac:SACOL0205"/>
<dbReference type="HOGENOM" id="CLU_058969_1_1_9"/>
<dbReference type="Proteomes" id="UP000000530">
    <property type="component" value="Chromosome"/>
</dbReference>
<dbReference type="GO" id="GO:0005737">
    <property type="term" value="C:cytoplasm"/>
    <property type="evidence" value="ECO:0007669"/>
    <property type="project" value="UniProtKB-SubCell"/>
</dbReference>
<dbReference type="GO" id="GO:0051539">
    <property type="term" value="F:4 iron, 4 sulfur cluster binding"/>
    <property type="evidence" value="ECO:0007669"/>
    <property type="project" value="UniProtKB-KW"/>
</dbReference>
<dbReference type="GO" id="GO:0043365">
    <property type="term" value="F:[formate-C-acetyltransferase]-activating enzyme activity"/>
    <property type="evidence" value="ECO:0007669"/>
    <property type="project" value="UniProtKB-EC"/>
</dbReference>
<dbReference type="GO" id="GO:0046872">
    <property type="term" value="F:metal ion binding"/>
    <property type="evidence" value="ECO:0007669"/>
    <property type="project" value="UniProtKB-KW"/>
</dbReference>
<dbReference type="GO" id="GO:0006006">
    <property type="term" value="P:glucose metabolic process"/>
    <property type="evidence" value="ECO:0007669"/>
    <property type="project" value="UniProtKB-KW"/>
</dbReference>
<dbReference type="CDD" id="cd01335">
    <property type="entry name" value="Radical_SAM"/>
    <property type="match status" value="1"/>
</dbReference>
<dbReference type="Gene3D" id="3.20.20.70">
    <property type="entry name" value="Aldolase class I"/>
    <property type="match status" value="1"/>
</dbReference>
<dbReference type="InterPro" id="IPR013785">
    <property type="entry name" value="Aldolase_TIM"/>
</dbReference>
<dbReference type="InterPro" id="IPR040074">
    <property type="entry name" value="BssD/PflA/YjjW"/>
</dbReference>
<dbReference type="InterPro" id="IPR034457">
    <property type="entry name" value="Organic_radical-activating"/>
</dbReference>
<dbReference type="InterPro" id="IPR012839">
    <property type="entry name" value="Organic_radical_activase"/>
</dbReference>
<dbReference type="InterPro" id="IPR012838">
    <property type="entry name" value="PFL1_activating"/>
</dbReference>
<dbReference type="InterPro" id="IPR034465">
    <property type="entry name" value="Pyruvate_for-lyase_activase"/>
</dbReference>
<dbReference type="InterPro" id="IPR001989">
    <property type="entry name" value="Radical_activat_CS"/>
</dbReference>
<dbReference type="InterPro" id="IPR007197">
    <property type="entry name" value="rSAM"/>
</dbReference>
<dbReference type="NCBIfam" id="TIGR02493">
    <property type="entry name" value="PFLA"/>
    <property type="match status" value="1"/>
</dbReference>
<dbReference type="PANTHER" id="PTHR30352:SF5">
    <property type="entry name" value="PYRUVATE FORMATE-LYASE 1-ACTIVATING ENZYME"/>
    <property type="match status" value="1"/>
</dbReference>
<dbReference type="PANTHER" id="PTHR30352">
    <property type="entry name" value="PYRUVATE FORMATE-LYASE-ACTIVATING ENZYME"/>
    <property type="match status" value="1"/>
</dbReference>
<dbReference type="Pfam" id="PF13353">
    <property type="entry name" value="Fer4_12"/>
    <property type="match status" value="1"/>
</dbReference>
<dbReference type="Pfam" id="PF04055">
    <property type="entry name" value="Radical_SAM"/>
    <property type="match status" value="1"/>
</dbReference>
<dbReference type="PIRSF" id="PIRSF000371">
    <property type="entry name" value="PFL_act_enz"/>
    <property type="match status" value="1"/>
</dbReference>
<dbReference type="SFLD" id="SFLDG01118">
    <property type="entry name" value="activating_enzymes__group_2"/>
    <property type="match status" value="1"/>
</dbReference>
<dbReference type="SFLD" id="SFLDF00278">
    <property type="entry name" value="pyruvate_formate-lyase_activas"/>
    <property type="match status" value="1"/>
</dbReference>
<dbReference type="SUPFAM" id="SSF102114">
    <property type="entry name" value="Radical SAM enzymes"/>
    <property type="match status" value="1"/>
</dbReference>
<dbReference type="PROSITE" id="PS01087">
    <property type="entry name" value="RADICAL_ACTIVATING"/>
    <property type="match status" value="1"/>
</dbReference>
<dbReference type="PROSITE" id="PS51918">
    <property type="entry name" value="RADICAL_SAM"/>
    <property type="match status" value="1"/>
</dbReference>
<reference key="1">
    <citation type="journal article" date="2005" name="J. Bacteriol.">
        <title>Insights on evolution of virulence and resistance from the complete genome analysis of an early methicillin-resistant Staphylococcus aureus strain and a biofilm-producing methicillin-resistant Staphylococcus epidermidis strain.</title>
        <authorList>
            <person name="Gill S.R."/>
            <person name="Fouts D.E."/>
            <person name="Archer G.L."/>
            <person name="Mongodin E.F."/>
            <person name="DeBoy R.T."/>
            <person name="Ravel J."/>
            <person name="Paulsen I.T."/>
            <person name="Kolonay J.F."/>
            <person name="Brinkac L.M."/>
            <person name="Beanan M.J."/>
            <person name="Dodson R.J."/>
            <person name="Daugherty S.C."/>
            <person name="Madupu R."/>
            <person name="Angiuoli S.V."/>
            <person name="Durkin A.S."/>
            <person name="Haft D.H."/>
            <person name="Vamathevan J.J."/>
            <person name="Khouri H."/>
            <person name="Utterback T.R."/>
            <person name="Lee C."/>
            <person name="Dimitrov G."/>
            <person name="Jiang L."/>
            <person name="Qin H."/>
            <person name="Weidman J."/>
            <person name="Tran K."/>
            <person name="Kang K.H."/>
            <person name="Hance I.R."/>
            <person name="Nelson K.E."/>
            <person name="Fraser C.M."/>
        </authorList>
    </citation>
    <scope>NUCLEOTIDE SEQUENCE [LARGE SCALE GENOMIC DNA]</scope>
    <source>
        <strain>COL</strain>
    </source>
</reference>
<name>PFLA_STAAC</name>
<feature type="chain" id="PRO_0000271711" description="Pyruvate formate-lyase-activating enzyme">
    <location>
        <begin position="1"/>
        <end position="251"/>
    </location>
</feature>
<feature type="domain" description="Radical SAM core" evidence="3">
    <location>
        <begin position="15"/>
        <end position="244"/>
    </location>
</feature>
<feature type="binding site" evidence="2">
    <location>
        <position position="29"/>
    </location>
    <ligand>
        <name>[4Fe-4S] cluster</name>
        <dbReference type="ChEBI" id="CHEBI:49883"/>
        <note>4Fe-4S-S-AdoMet</note>
    </ligand>
</feature>
<feature type="binding site" evidence="2">
    <location>
        <position position="33"/>
    </location>
    <ligand>
        <name>[4Fe-4S] cluster</name>
        <dbReference type="ChEBI" id="CHEBI:49883"/>
        <note>4Fe-4S-S-AdoMet</note>
    </ligand>
</feature>
<feature type="binding site" evidence="2">
    <location>
        <begin position="35"/>
        <end position="37"/>
    </location>
    <ligand>
        <name>S-adenosyl-L-methionine</name>
        <dbReference type="ChEBI" id="CHEBI:59789"/>
    </ligand>
</feature>
<feature type="binding site" evidence="2">
    <location>
        <position position="36"/>
    </location>
    <ligand>
        <name>[4Fe-4S] cluster</name>
        <dbReference type="ChEBI" id="CHEBI:49883"/>
        <note>4Fe-4S-S-AdoMet</note>
    </ligand>
</feature>
<feature type="binding site" evidence="2">
    <location>
        <position position="79"/>
    </location>
    <ligand>
        <name>S-adenosyl-L-methionine</name>
        <dbReference type="ChEBI" id="CHEBI:59789"/>
    </ligand>
</feature>
<feature type="binding site" evidence="2">
    <location>
        <begin position="134"/>
        <end position="136"/>
    </location>
    <ligand>
        <name>S-adenosyl-L-methionine</name>
        <dbReference type="ChEBI" id="CHEBI:59789"/>
    </ligand>
</feature>
<feature type="binding site" evidence="2">
    <location>
        <position position="207"/>
    </location>
    <ligand>
        <name>S-adenosyl-L-methionine</name>
        <dbReference type="ChEBI" id="CHEBI:59789"/>
    </ligand>
</feature>
<comment type="function">
    <text evidence="1">Activation of pyruvate formate-lyase under anaerobic conditions by generation of an organic free radical, using S-adenosylmethionine and reduced flavodoxin as cosubstrates to produce 5'-deoxy-adenosine.</text>
</comment>
<comment type="catalytic activity">
    <reaction>
        <text>glycyl-[formate C-acetyltransferase] + reduced [flavodoxin] + S-adenosyl-L-methionine = glycin-2-yl radical-[formate C-acetyltransferase] + semiquinone [flavodoxin] + 5'-deoxyadenosine + L-methionine + H(+)</text>
        <dbReference type="Rhea" id="RHEA:19225"/>
        <dbReference type="Rhea" id="RHEA-COMP:10622"/>
        <dbReference type="Rhea" id="RHEA-COMP:12190"/>
        <dbReference type="Rhea" id="RHEA-COMP:12191"/>
        <dbReference type="Rhea" id="RHEA-COMP:14480"/>
        <dbReference type="ChEBI" id="CHEBI:15378"/>
        <dbReference type="ChEBI" id="CHEBI:17319"/>
        <dbReference type="ChEBI" id="CHEBI:29947"/>
        <dbReference type="ChEBI" id="CHEBI:32722"/>
        <dbReference type="ChEBI" id="CHEBI:57618"/>
        <dbReference type="ChEBI" id="CHEBI:57844"/>
        <dbReference type="ChEBI" id="CHEBI:59789"/>
        <dbReference type="ChEBI" id="CHEBI:140311"/>
        <dbReference type="EC" id="1.97.1.4"/>
    </reaction>
</comment>
<comment type="cofactor">
    <cofactor evidence="1">
        <name>[4Fe-4S] cluster</name>
        <dbReference type="ChEBI" id="CHEBI:49883"/>
    </cofactor>
    <text evidence="1">Binds 1 [4Fe-4S] cluster. The cluster is coordinated with 3 cysteines and an exchangeable S-adenosyl-L-methionine.</text>
</comment>
<comment type="subcellular location">
    <subcellularLocation>
        <location evidence="1">Cytoplasm</location>
    </subcellularLocation>
</comment>
<comment type="similarity">
    <text evidence="4">Belongs to the organic radical-activating enzymes family.</text>
</comment>
<evidence type="ECO:0000250" key="1"/>
<evidence type="ECO:0000250" key="2">
    <source>
        <dbReference type="UniProtKB" id="P0A9N4"/>
    </source>
</evidence>
<evidence type="ECO:0000255" key="3">
    <source>
        <dbReference type="PROSITE-ProRule" id="PRU01266"/>
    </source>
</evidence>
<evidence type="ECO:0000305" key="4"/>
<gene>
    <name type="primary">pflA</name>
    <name type="ordered locus">SACOL0205</name>
</gene>
<sequence>MLKGHLHSVESLGTVDGPGLRYILFTQGCLLRCLYCHNPDTWKISEPSREVTVDEMVNEILPYKPYFDASGGGVTVSGGEPLLQMPFLEKLFAELKENGVHTCLDTSAGCANDTKAFQRHFEELQKHTDLILLDIKHIDNDKHIRLTGKPNTHILNFARKLSDMKQPVWIRHVLVPGYSDDKDDLIKLGEFINSLDNVEKFEILPYHQLGVHKWKTLGIAYELEDVEAPDDEAVKAAYRYVNFKGKIPVEL</sequence>